<gene>
    <name evidence="1" type="primary">hemA</name>
    <name type="ordered locus">MSMEG_0952</name>
    <name type="ordered locus">MSMEI_0927</name>
</gene>
<evidence type="ECO:0000255" key="1">
    <source>
        <dbReference type="HAMAP-Rule" id="MF_00087"/>
    </source>
</evidence>
<proteinExistence type="inferred from homology"/>
<protein>
    <recommendedName>
        <fullName evidence="1">Glutamyl-tRNA reductase</fullName>
        <shortName evidence="1">GluTR</shortName>
        <ecNumber evidence="1">1.2.1.70</ecNumber>
    </recommendedName>
</protein>
<name>HEM1_MYCS2</name>
<feature type="chain" id="PRO_1000004647" description="Glutamyl-tRNA reductase">
    <location>
        <begin position="1"/>
        <end position="451"/>
    </location>
</feature>
<feature type="active site" description="Nucleophile" evidence="1">
    <location>
        <position position="50"/>
    </location>
</feature>
<feature type="binding site" evidence="1">
    <location>
        <begin position="49"/>
        <end position="52"/>
    </location>
    <ligand>
        <name>substrate</name>
    </ligand>
</feature>
<feature type="binding site" evidence="1">
    <location>
        <position position="109"/>
    </location>
    <ligand>
        <name>substrate</name>
    </ligand>
</feature>
<feature type="binding site" evidence="1">
    <location>
        <begin position="114"/>
        <end position="116"/>
    </location>
    <ligand>
        <name>substrate</name>
    </ligand>
</feature>
<feature type="binding site" evidence="1">
    <location>
        <position position="120"/>
    </location>
    <ligand>
        <name>substrate</name>
    </ligand>
</feature>
<feature type="binding site" evidence="1">
    <location>
        <begin position="190"/>
        <end position="195"/>
    </location>
    <ligand>
        <name>NADP(+)</name>
        <dbReference type="ChEBI" id="CHEBI:58349"/>
    </ligand>
</feature>
<feature type="site" description="Important for activity" evidence="1">
    <location>
        <position position="99"/>
    </location>
</feature>
<sequence>MSVLLFGVSHRSAPVSVLEQLSTNEAEQAKIIDQVLQSSLVTEAMVLSTCNRVEVYAVVEAFHGGLSVIGQVLAERSGMSLNDLTKYAYVRYAEAAVEHLFAVTSGLDSAVIGEQQVLGQVRRAYATAEANRTVGRTLHELAQRALSVGKRVHSETGIDAAGASVVSVALGMAETKLSGGLGGRTAAVVGAGAMGALAGAHLVRAGIERVHVVNRSLPRAERLAKNLTEQGVVADAVGLDDIARALVDADVVLSSTGAVRPVVSLADVHYALAQRTLAGAEHQMVVCDLGMPRDVDPAVSGLPGVWVVDMDRIQREPSARAAAVDAEAARNIVAAEVANYLAGQRMAEVTPTVTALRQRAADVVEAELLRLDNRLPGLDAAHRDEVAKTVRRVVDKLLHAPTVRVKQLASAPGGDSYAEALRELFELDPQAVEAVAASELPLITTDLDKTE</sequence>
<keyword id="KW-0521">NADP</keyword>
<keyword id="KW-0560">Oxidoreductase</keyword>
<keyword id="KW-0627">Porphyrin biosynthesis</keyword>
<keyword id="KW-1185">Reference proteome</keyword>
<organism>
    <name type="scientific">Mycolicibacterium smegmatis (strain ATCC 700084 / mc(2)155)</name>
    <name type="common">Mycobacterium smegmatis</name>
    <dbReference type="NCBI Taxonomy" id="246196"/>
    <lineage>
        <taxon>Bacteria</taxon>
        <taxon>Bacillati</taxon>
        <taxon>Actinomycetota</taxon>
        <taxon>Actinomycetes</taxon>
        <taxon>Mycobacteriales</taxon>
        <taxon>Mycobacteriaceae</taxon>
        <taxon>Mycolicibacterium</taxon>
    </lineage>
</organism>
<dbReference type="EC" id="1.2.1.70" evidence="1"/>
<dbReference type="EMBL" id="CP000480">
    <property type="protein sequence ID" value="ABK71005.1"/>
    <property type="molecule type" value="Genomic_DNA"/>
</dbReference>
<dbReference type="EMBL" id="CP001663">
    <property type="protein sequence ID" value="AFP37407.1"/>
    <property type="molecule type" value="Genomic_DNA"/>
</dbReference>
<dbReference type="RefSeq" id="WP_011727309.1">
    <property type="nucleotide sequence ID" value="NZ_SIJM01000010.1"/>
</dbReference>
<dbReference type="RefSeq" id="YP_885355.1">
    <property type="nucleotide sequence ID" value="NC_008596.1"/>
</dbReference>
<dbReference type="SMR" id="A0QR17"/>
<dbReference type="STRING" id="246196.MSMEG_0952"/>
<dbReference type="PaxDb" id="246196-MSMEI_0927"/>
<dbReference type="KEGG" id="msb:LJ00_04720"/>
<dbReference type="KEGG" id="msg:MSMEI_0927"/>
<dbReference type="KEGG" id="msm:MSMEG_0952"/>
<dbReference type="PATRIC" id="fig|246196.19.peg.941"/>
<dbReference type="eggNOG" id="COG0373">
    <property type="taxonomic scope" value="Bacteria"/>
</dbReference>
<dbReference type="OrthoDB" id="110209at2"/>
<dbReference type="UniPathway" id="UPA00251">
    <property type="reaction ID" value="UER00316"/>
</dbReference>
<dbReference type="Proteomes" id="UP000000757">
    <property type="component" value="Chromosome"/>
</dbReference>
<dbReference type="Proteomes" id="UP000006158">
    <property type="component" value="Chromosome"/>
</dbReference>
<dbReference type="GO" id="GO:0008883">
    <property type="term" value="F:glutamyl-tRNA reductase activity"/>
    <property type="evidence" value="ECO:0007669"/>
    <property type="project" value="UniProtKB-UniRule"/>
</dbReference>
<dbReference type="GO" id="GO:0050661">
    <property type="term" value="F:NADP binding"/>
    <property type="evidence" value="ECO:0007669"/>
    <property type="project" value="InterPro"/>
</dbReference>
<dbReference type="GO" id="GO:0019353">
    <property type="term" value="P:protoporphyrinogen IX biosynthetic process from glutamate"/>
    <property type="evidence" value="ECO:0007669"/>
    <property type="project" value="TreeGrafter"/>
</dbReference>
<dbReference type="CDD" id="cd05213">
    <property type="entry name" value="NAD_bind_Glutamyl_tRNA_reduct"/>
    <property type="match status" value="1"/>
</dbReference>
<dbReference type="FunFam" id="3.30.460.30:FF:000001">
    <property type="entry name" value="Glutamyl-tRNA reductase"/>
    <property type="match status" value="1"/>
</dbReference>
<dbReference type="Gene3D" id="3.30.460.30">
    <property type="entry name" value="Glutamyl-tRNA reductase, N-terminal domain"/>
    <property type="match status" value="1"/>
</dbReference>
<dbReference type="Gene3D" id="3.40.50.720">
    <property type="entry name" value="NAD(P)-binding Rossmann-like Domain"/>
    <property type="match status" value="1"/>
</dbReference>
<dbReference type="HAMAP" id="MF_00087">
    <property type="entry name" value="Glu_tRNA_reductase"/>
    <property type="match status" value="1"/>
</dbReference>
<dbReference type="InterPro" id="IPR000343">
    <property type="entry name" value="4pyrrol_synth_GluRdtase"/>
</dbReference>
<dbReference type="InterPro" id="IPR015896">
    <property type="entry name" value="4pyrrol_synth_GluRdtase_dimer"/>
</dbReference>
<dbReference type="InterPro" id="IPR015895">
    <property type="entry name" value="4pyrrol_synth_GluRdtase_N"/>
</dbReference>
<dbReference type="InterPro" id="IPR018214">
    <property type="entry name" value="GluRdtase_CS"/>
</dbReference>
<dbReference type="InterPro" id="IPR036453">
    <property type="entry name" value="GluRdtase_dimer_dom_sf"/>
</dbReference>
<dbReference type="InterPro" id="IPR036343">
    <property type="entry name" value="GluRdtase_N_sf"/>
</dbReference>
<dbReference type="InterPro" id="IPR036291">
    <property type="entry name" value="NAD(P)-bd_dom_sf"/>
</dbReference>
<dbReference type="InterPro" id="IPR006151">
    <property type="entry name" value="Shikm_DH/Glu-tRNA_Rdtase"/>
</dbReference>
<dbReference type="NCBIfam" id="TIGR01035">
    <property type="entry name" value="hemA"/>
    <property type="match status" value="1"/>
</dbReference>
<dbReference type="NCBIfam" id="NF000744">
    <property type="entry name" value="PRK00045.1-3"/>
    <property type="match status" value="1"/>
</dbReference>
<dbReference type="PANTHER" id="PTHR43013">
    <property type="entry name" value="GLUTAMYL-TRNA REDUCTASE"/>
    <property type="match status" value="1"/>
</dbReference>
<dbReference type="PANTHER" id="PTHR43013:SF1">
    <property type="entry name" value="GLUTAMYL-TRNA REDUCTASE"/>
    <property type="match status" value="1"/>
</dbReference>
<dbReference type="Pfam" id="PF00745">
    <property type="entry name" value="GlutR_dimer"/>
    <property type="match status" value="1"/>
</dbReference>
<dbReference type="Pfam" id="PF05201">
    <property type="entry name" value="GlutR_N"/>
    <property type="match status" value="1"/>
</dbReference>
<dbReference type="Pfam" id="PF01488">
    <property type="entry name" value="Shikimate_DH"/>
    <property type="match status" value="1"/>
</dbReference>
<dbReference type="PIRSF" id="PIRSF000445">
    <property type="entry name" value="4pyrrol_synth_GluRdtase"/>
    <property type="match status" value="1"/>
</dbReference>
<dbReference type="SUPFAM" id="SSF69742">
    <property type="entry name" value="Glutamyl tRNA-reductase catalytic, N-terminal domain"/>
    <property type="match status" value="1"/>
</dbReference>
<dbReference type="SUPFAM" id="SSF69075">
    <property type="entry name" value="Glutamyl tRNA-reductase dimerization domain"/>
    <property type="match status" value="1"/>
</dbReference>
<dbReference type="SUPFAM" id="SSF51735">
    <property type="entry name" value="NAD(P)-binding Rossmann-fold domains"/>
    <property type="match status" value="1"/>
</dbReference>
<dbReference type="PROSITE" id="PS00747">
    <property type="entry name" value="GLUTR"/>
    <property type="match status" value="1"/>
</dbReference>
<accession>A0QR17</accession>
<accession>I7FXC4</accession>
<comment type="function">
    <text evidence="1">Catalyzes the NADPH-dependent reduction of glutamyl-tRNA(Glu) to glutamate 1-semialdehyde (GSA).</text>
</comment>
<comment type="catalytic activity">
    <reaction evidence="1">
        <text>(S)-4-amino-5-oxopentanoate + tRNA(Glu) + NADP(+) = L-glutamyl-tRNA(Glu) + NADPH + H(+)</text>
        <dbReference type="Rhea" id="RHEA:12344"/>
        <dbReference type="Rhea" id="RHEA-COMP:9663"/>
        <dbReference type="Rhea" id="RHEA-COMP:9680"/>
        <dbReference type="ChEBI" id="CHEBI:15378"/>
        <dbReference type="ChEBI" id="CHEBI:57501"/>
        <dbReference type="ChEBI" id="CHEBI:57783"/>
        <dbReference type="ChEBI" id="CHEBI:58349"/>
        <dbReference type="ChEBI" id="CHEBI:78442"/>
        <dbReference type="ChEBI" id="CHEBI:78520"/>
        <dbReference type="EC" id="1.2.1.70"/>
    </reaction>
</comment>
<comment type="pathway">
    <text evidence="1">Porphyrin-containing compound metabolism; protoporphyrin-IX biosynthesis; 5-aminolevulinate from L-glutamyl-tRNA(Glu): step 1/2.</text>
</comment>
<comment type="subunit">
    <text evidence="1">Homodimer.</text>
</comment>
<comment type="domain">
    <text evidence="1">Possesses an unusual extended V-shaped dimeric structure with each monomer consisting of three distinct domains arranged along a curved 'spinal' alpha-helix. The N-terminal catalytic domain specifically recognizes the glutamate moiety of the substrate. The second domain is the NADPH-binding domain, and the third C-terminal domain is responsible for dimerization.</text>
</comment>
<comment type="miscellaneous">
    <text evidence="1">During catalysis, the active site Cys acts as a nucleophile attacking the alpha-carbonyl group of tRNA-bound glutamate with the formation of a thioester intermediate between enzyme and glutamate, and the concomitant release of tRNA(Glu). The thioester intermediate is finally reduced by direct hydride transfer from NADPH, to form the product GSA.</text>
</comment>
<comment type="similarity">
    <text evidence="1">Belongs to the glutamyl-tRNA reductase family.</text>
</comment>
<reference key="1">
    <citation type="submission" date="2006-10" db="EMBL/GenBank/DDBJ databases">
        <authorList>
            <person name="Fleischmann R.D."/>
            <person name="Dodson R.J."/>
            <person name="Haft D.H."/>
            <person name="Merkel J.S."/>
            <person name="Nelson W.C."/>
            <person name="Fraser C.M."/>
        </authorList>
    </citation>
    <scope>NUCLEOTIDE SEQUENCE [LARGE SCALE GENOMIC DNA]</scope>
    <source>
        <strain>ATCC 700084 / mc(2)155</strain>
    </source>
</reference>
<reference key="2">
    <citation type="journal article" date="2007" name="Genome Biol.">
        <title>Interrupted coding sequences in Mycobacterium smegmatis: authentic mutations or sequencing errors?</title>
        <authorList>
            <person name="Deshayes C."/>
            <person name="Perrodou E."/>
            <person name="Gallien S."/>
            <person name="Euphrasie D."/>
            <person name="Schaeffer C."/>
            <person name="Van-Dorsselaer A."/>
            <person name="Poch O."/>
            <person name="Lecompte O."/>
            <person name="Reyrat J.-M."/>
        </authorList>
    </citation>
    <scope>NUCLEOTIDE SEQUENCE [LARGE SCALE GENOMIC DNA]</scope>
    <source>
        <strain>ATCC 700084 / mc(2)155</strain>
    </source>
</reference>
<reference key="3">
    <citation type="journal article" date="2009" name="Genome Res.">
        <title>Ortho-proteogenomics: multiple proteomes investigation through orthology and a new MS-based protocol.</title>
        <authorList>
            <person name="Gallien S."/>
            <person name="Perrodou E."/>
            <person name="Carapito C."/>
            <person name="Deshayes C."/>
            <person name="Reyrat J.-M."/>
            <person name="Van Dorsselaer A."/>
            <person name="Poch O."/>
            <person name="Schaeffer C."/>
            <person name="Lecompte O."/>
        </authorList>
    </citation>
    <scope>NUCLEOTIDE SEQUENCE [LARGE SCALE GENOMIC DNA]</scope>
    <source>
        <strain>ATCC 700084 / mc(2)155</strain>
    </source>
</reference>